<comment type="function">
    <text evidence="1">This protein is one of the early assembly proteins of the 50S ribosomal subunit, although it is not seen to bind rRNA by itself. It is important during the early stages of 50S assembly.</text>
</comment>
<comment type="subunit">
    <text evidence="1">Part of the 50S ribosomal subunit.</text>
</comment>
<comment type="similarity">
    <text evidence="1">Belongs to the universal ribosomal protein uL13 family.</text>
</comment>
<dbReference type="EMBL" id="CP000513">
    <property type="protein sequence ID" value="ABQ13820.1"/>
    <property type="molecule type" value="Genomic_DNA"/>
</dbReference>
<dbReference type="RefSeq" id="WP_012031433.1">
    <property type="nucleotide sequence ID" value="NC_009446.1"/>
</dbReference>
<dbReference type="SMR" id="A5EXM0"/>
<dbReference type="STRING" id="246195.DNO_1129"/>
<dbReference type="KEGG" id="dno:DNO_1129"/>
<dbReference type="eggNOG" id="COG0102">
    <property type="taxonomic scope" value="Bacteria"/>
</dbReference>
<dbReference type="HOGENOM" id="CLU_082184_2_2_6"/>
<dbReference type="OrthoDB" id="9801330at2"/>
<dbReference type="Proteomes" id="UP000000248">
    <property type="component" value="Chromosome"/>
</dbReference>
<dbReference type="GO" id="GO:0022625">
    <property type="term" value="C:cytosolic large ribosomal subunit"/>
    <property type="evidence" value="ECO:0007669"/>
    <property type="project" value="TreeGrafter"/>
</dbReference>
<dbReference type="GO" id="GO:0003729">
    <property type="term" value="F:mRNA binding"/>
    <property type="evidence" value="ECO:0007669"/>
    <property type="project" value="TreeGrafter"/>
</dbReference>
<dbReference type="GO" id="GO:0003735">
    <property type="term" value="F:structural constituent of ribosome"/>
    <property type="evidence" value="ECO:0007669"/>
    <property type="project" value="InterPro"/>
</dbReference>
<dbReference type="GO" id="GO:0017148">
    <property type="term" value="P:negative regulation of translation"/>
    <property type="evidence" value="ECO:0007669"/>
    <property type="project" value="TreeGrafter"/>
</dbReference>
<dbReference type="GO" id="GO:0006412">
    <property type="term" value="P:translation"/>
    <property type="evidence" value="ECO:0007669"/>
    <property type="project" value="UniProtKB-UniRule"/>
</dbReference>
<dbReference type="CDD" id="cd00392">
    <property type="entry name" value="Ribosomal_L13"/>
    <property type="match status" value="1"/>
</dbReference>
<dbReference type="FunFam" id="3.90.1180.10:FF:000001">
    <property type="entry name" value="50S ribosomal protein L13"/>
    <property type="match status" value="1"/>
</dbReference>
<dbReference type="Gene3D" id="3.90.1180.10">
    <property type="entry name" value="Ribosomal protein L13"/>
    <property type="match status" value="1"/>
</dbReference>
<dbReference type="HAMAP" id="MF_01366">
    <property type="entry name" value="Ribosomal_uL13"/>
    <property type="match status" value="1"/>
</dbReference>
<dbReference type="InterPro" id="IPR005822">
    <property type="entry name" value="Ribosomal_uL13"/>
</dbReference>
<dbReference type="InterPro" id="IPR005823">
    <property type="entry name" value="Ribosomal_uL13_bac-type"/>
</dbReference>
<dbReference type="InterPro" id="IPR023563">
    <property type="entry name" value="Ribosomal_uL13_CS"/>
</dbReference>
<dbReference type="InterPro" id="IPR036899">
    <property type="entry name" value="Ribosomal_uL13_sf"/>
</dbReference>
<dbReference type="NCBIfam" id="TIGR01066">
    <property type="entry name" value="rplM_bact"/>
    <property type="match status" value="1"/>
</dbReference>
<dbReference type="PANTHER" id="PTHR11545:SF2">
    <property type="entry name" value="LARGE RIBOSOMAL SUBUNIT PROTEIN UL13M"/>
    <property type="match status" value="1"/>
</dbReference>
<dbReference type="PANTHER" id="PTHR11545">
    <property type="entry name" value="RIBOSOMAL PROTEIN L13"/>
    <property type="match status" value="1"/>
</dbReference>
<dbReference type="Pfam" id="PF00572">
    <property type="entry name" value="Ribosomal_L13"/>
    <property type="match status" value="1"/>
</dbReference>
<dbReference type="PIRSF" id="PIRSF002181">
    <property type="entry name" value="Ribosomal_L13"/>
    <property type="match status" value="1"/>
</dbReference>
<dbReference type="SUPFAM" id="SSF52161">
    <property type="entry name" value="Ribosomal protein L13"/>
    <property type="match status" value="1"/>
</dbReference>
<dbReference type="PROSITE" id="PS00783">
    <property type="entry name" value="RIBOSOMAL_L13"/>
    <property type="match status" value="1"/>
</dbReference>
<protein>
    <recommendedName>
        <fullName evidence="1">Large ribosomal subunit protein uL13</fullName>
    </recommendedName>
    <alternativeName>
        <fullName evidence="2">50S ribosomal protein L13</fullName>
    </alternativeName>
</protein>
<keyword id="KW-1185">Reference proteome</keyword>
<keyword id="KW-0687">Ribonucleoprotein</keyword>
<keyword id="KW-0689">Ribosomal protein</keyword>
<accession>A5EXM0</accession>
<evidence type="ECO:0000255" key="1">
    <source>
        <dbReference type="HAMAP-Rule" id="MF_01366"/>
    </source>
</evidence>
<evidence type="ECO:0000305" key="2"/>
<feature type="chain" id="PRO_1000055378" description="Large ribosomal subunit protein uL13">
    <location>
        <begin position="1"/>
        <end position="143"/>
    </location>
</feature>
<organism>
    <name type="scientific">Dichelobacter nodosus (strain VCS1703A)</name>
    <dbReference type="NCBI Taxonomy" id="246195"/>
    <lineage>
        <taxon>Bacteria</taxon>
        <taxon>Pseudomonadati</taxon>
        <taxon>Pseudomonadota</taxon>
        <taxon>Gammaproteobacteria</taxon>
        <taxon>Cardiobacteriales</taxon>
        <taxon>Cardiobacteriaceae</taxon>
        <taxon>Dichelobacter</taxon>
    </lineage>
</organism>
<name>RL13_DICNV</name>
<sequence length="143" mass="15983">MFKTYTAAPASVEREWYVIDADGKTLGRLATEVARRLRGKHKPEFTPNIDTGDYVIVINADKIGVTGRKEQDKIYYHHTGYVGSMKSANFSQMQQRNPGRVLEIAVKGMLPKGPLGRAQLKKLKIYAGSEHEHSAQQPTALEI</sequence>
<reference key="1">
    <citation type="journal article" date="2007" name="Nat. Biotechnol.">
        <title>Genome sequence and identification of candidate vaccine antigens from the animal pathogen Dichelobacter nodosus.</title>
        <authorList>
            <person name="Myers G.S.A."/>
            <person name="Parker D."/>
            <person name="Al-Hasani K."/>
            <person name="Kennan R.M."/>
            <person name="Seemann T."/>
            <person name="Ren Q."/>
            <person name="Badger J.H."/>
            <person name="Selengut J.D."/>
            <person name="Deboy R.T."/>
            <person name="Tettelin H."/>
            <person name="Boyce J.D."/>
            <person name="McCarl V.P."/>
            <person name="Han X."/>
            <person name="Nelson W.C."/>
            <person name="Madupu R."/>
            <person name="Mohamoud Y."/>
            <person name="Holley T."/>
            <person name="Fedorova N."/>
            <person name="Khouri H."/>
            <person name="Bottomley S.P."/>
            <person name="Whittington R.J."/>
            <person name="Adler B."/>
            <person name="Songer J.G."/>
            <person name="Rood J.I."/>
            <person name="Paulsen I.T."/>
        </authorList>
    </citation>
    <scope>NUCLEOTIDE SEQUENCE [LARGE SCALE GENOMIC DNA]</scope>
    <source>
        <strain>VCS1703A</strain>
    </source>
</reference>
<gene>
    <name evidence="1" type="primary">rplM</name>
    <name type="ordered locus">DNO_1129</name>
</gene>
<proteinExistence type="inferred from homology"/>